<dbReference type="EC" id="2.8.1.13" evidence="1"/>
<dbReference type="EMBL" id="AM286690">
    <property type="protein sequence ID" value="CAL16723.1"/>
    <property type="molecule type" value="Genomic_DNA"/>
</dbReference>
<dbReference type="RefSeq" id="WP_011588558.1">
    <property type="nucleotide sequence ID" value="NC_008260.1"/>
</dbReference>
<dbReference type="SMR" id="Q0VQ25"/>
<dbReference type="STRING" id="393595.ABO_1275"/>
<dbReference type="KEGG" id="abo:ABO_1275"/>
<dbReference type="eggNOG" id="COG0482">
    <property type="taxonomic scope" value="Bacteria"/>
</dbReference>
<dbReference type="HOGENOM" id="CLU_035188_1_0_6"/>
<dbReference type="OrthoDB" id="9800696at2"/>
<dbReference type="Proteomes" id="UP000008871">
    <property type="component" value="Chromosome"/>
</dbReference>
<dbReference type="GO" id="GO:0005737">
    <property type="term" value="C:cytoplasm"/>
    <property type="evidence" value="ECO:0007669"/>
    <property type="project" value="UniProtKB-SubCell"/>
</dbReference>
<dbReference type="GO" id="GO:0005524">
    <property type="term" value="F:ATP binding"/>
    <property type="evidence" value="ECO:0007669"/>
    <property type="project" value="UniProtKB-KW"/>
</dbReference>
<dbReference type="GO" id="GO:0000049">
    <property type="term" value="F:tRNA binding"/>
    <property type="evidence" value="ECO:0007669"/>
    <property type="project" value="UniProtKB-KW"/>
</dbReference>
<dbReference type="GO" id="GO:0103016">
    <property type="term" value="F:tRNA-uridine 2-sulfurtransferase activity"/>
    <property type="evidence" value="ECO:0007669"/>
    <property type="project" value="UniProtKB-EC"/>
</dbReference>
<dbReference type="GO" id="GO:0002143">
    <property type="term" value="P:tRNA wobble position uridine thiolation"/>
    <property type="evidence" value="ECO:0007669"/>
    <property type="project" value="TreeGrafter"/>
</dbReference>
<dbReference type="CDD" id="cd01998">
    <property type="entry name" value="MnmA_TRMU-like"/>
    <property type="match status" value="1"/>
</dbReference>
<dbReference type="FunFam" id="2.30.30.280:FF:000001">
    <property type="entry name" value="tRNA-specific 2-thiouridylase MnmA"/>
    <property type="match status" value="1"/>
</dbReference>
<dbReference type="FunFam" id="2.40.30.10:FF:000023">
    <property type="entry name" value="tRNA-specific 2-thiouridylase MnmA"/>
    <property type="match status" value="1"/>
</dbReference>
<dbReference type="FunFam" id="3.40.50.620:FF:000004">
    <property type="entry name" value="tRNA-specific 2-thiouridylase MnmA"/>
    <property type="match status" value="1"/>
</dbReference>
<dbReference type="Gene3D" id="2.30.30.280">
    <property type="entry name" value="Adenine nucleotide alpha hydrolases-like domains"/>
    <property type="match status" value="1"/>
</dbReference>
<dbReference type="Gene3D" id="3.40.50.620">
    <property type="entry name" value="HUPs"/>
    <property type="match status" value="1"/>
</dbReference>
<dbReference type="Gene3D" id="2.40.30.10">
    <property type="entry name" value="Translation factors"/>
    <property type="match status" value="1"/>
</dbReference>
<dbReference type="HAMAP" id="MF_00144">
    <property type="entry name" value="tRNA_thiouridyl_MnmA"/>
    <property type="match status" value="1"/>
</dbReference>
<dbReference type="InterPro" id="IPR004506">
    <property type="entry name" value="MnmA-like"/>
</dbReference>
<dbReference type="InterPro" id="IPR046885">
    <property type="entry name" value="MnmA-like_C"/>
</dbReference>
<dbReference type="InterPro" id="IPR046884">
    <property type="entry name" value="MnmA-like_central"/>
</dbReference>
<dbReference type="InterPro" id="IPR023382">
    <property type="entry name" value="MnmA-like_central_sf"/>
</dbReference>
<dbReference type="InterPro" id="IPR014729">
    <property type="entry name" value="Rossmann-like_a/b/a_fold"/>
</dbReference>
<dbReference type="NCBIfam" id="NF001138">
    <property type="entry name" value="PRK00143.1"/>
    <property type="match status" value="1"/>
</dbReference>
<dbReference type="NCBIfam" id="TIGR00420">
    <property type="entry name" value="trmU"/>
    <property type="match status" value="1"/>
</dbReference>
<dbReference type="PANTHER" id="PTHR11933:SF5">
    <property type="entry name" value="MITOCHONDRIAL TRNA-SPECIFIC 2-THIOURIDYLASE 1"/>
    <property type="match status" value="1"/>
</dbReference>
<dbReference type="PANTHER" id="PTHR11933">
    <property type="entry name" value="TRNA 5-METHYLAMINOMETHYL-2-THIOURIDYLATE -METHYLTRANSFERASE"/>
    <property type="match status" value="1"/>
</dbReference>
<dbReference type="Pfam" id="PF03054">
    <property type="entry name" value="tRNA_Me_trans"/>
    <property type="match status" value="1"/>
</dbReference>
<dbReference type="Pfam" id="PF20258">
    <property type="entry name" value="tRNA_Me_trans_C"/>
    <property type="match status" value="1"/>
</dbReference>
<dbReference type="Pfam" id="PF20259">
    <property type="entry name" value="tRNA_Me_trans_M"/>
    <property type="match status" value="1"/>
</dbReference>
<dbReference type="SUPFAM" id="SSF52402">
    <property type="entry name" value="Adenine nucleotide alpha hydrolases-like"/>
    <property type="match status" value="1"/>
</dbReference>
<keyword id="KW-0067">ATP-binding</keyword>
<keyword id="KW-0963">Cytoplasm</keyword>
<keyword id="KW-1015">Disulfide bond</keyword>
<keyword id="KW-0547">Nucleotide-binding</keyword>
<keyword id="KW-1185">Reference proteome</keyword>
<keyword id="KW-0694">RNA-binding</keyword>
<keyword id="KW-0808">Transferase</keyword>
<keyword id="KW-0819">tRNA processing</keyword>
<keyword id="KW-0820">tRNA-binding</keyword>
<gene>
    <name evidence="1" type="primary">mnmA</name>
    <name type="ordered locus">ABO_1275</name>
</gene>
<accession>Q0VQ25</accession>
<sequence>MTKAPQDTRVIVGMSGGVDSSVAAARLIDAGYQVEGLFMKNWNEDDGTDYCTAREDLLDAMQVAGVLGIELHTANFAEQYWDRVFAHFLAEYKAGRTPNPDILCNKEIKFQAFLDHAITLGADYIATGHYSQVSHTGKAKLLRAVDTNKDQTYFLHAVDYQKFDRTLFPLGDLEKPEVRRIAEQKGFDNHKKKDSTGICFIGERRFKDFLEQYLPAQPGSIEDDHGNVIGQHDGLMYYTLGQRQGLGIGGLASASEAPWYVAKKDLERNVLIAVQGTDHPLLYSRVLNSAPMQWVALEAPALPARLTAKTRYRQPDQGCTVSDAGEGRVTVTFDEPQRAVTPGQSVVFYDGPVCLGGAVIEETA</sequence>
<name>MNMA_ALCBS</name>
<feature type="chain" id="PRO_0000349505" description="tRNA-specific 2-thiouridylase MnmA">
    <location>
        <begin position="1"/>
        <end position="364"/>
    </location>
</feature>
<feature type="region of interest" description="Interaction with target base in tRNA" evidence="1">
    <location>
        <begin position="99"/>
        <end position="101"/>
    </location>
</feature>
<feature type="region of interest" description="Interaction with tRNA" evidence="1">
    <location>
        <begin position="149"/>
        <end position="151"/>
    </location>
</feature>
<feature type="region of interest" description="Interaction with tRNA" evidence="1">
    <location>
        <begin position="311"/>
        <end position="312"/>
    </location>
</feature>
<feature type="active site" description="Nucleophile" evidence="1">
    <location>
        <position position="104"/>
    </location>
</feature>
<feature type="active site" description="Cysteine persulfide intermediate" evidence="1">
    <location>
        <position position="199"/>
    </location>
</feature>
<feature type="binding site" evidence="1">
    <location>
        <begin position="13"/>
        <end position="20"/>
    </location>
    <ligand>
        <name>ATP</name>
        <dbReference type="ChEBI" id="CHEBI:30616"/>
    </ligand>
</feature>
<feature type="binding site" evidence="1">
    <location>
        <position position="39"/>
    </location>
    <ligand>
        <name>ATP</name>
        <dbReference type="ChEBI" id="CHEBI:30616"/>
    </ligand>
</feature>
<feature type="binding site" evidence="1">
    <location>
        <position position="128"/>
    </location>
    <ligand>
        <name>ATP</name>
        <dbReference type="ChEBI" id="CHEBI:30616"/>
    </ligand>
</feature>
<feature type="site" description="Interaction with tRNA" evidence="1">
    <location>
        <position position="129"/>
    </location>
</feature>
<feature type="site" description="Interaction with tRNA" evidence="1">
    <location>
        <position position="344"/>
    </location>
</feature>
<feature type="disulfide bond" description="Alternate" evidence="1">
    <location>
        <begin position="104"/>
        <end position="199"/>
    </location>
</feature>
<organism>
    <name type="scientific">Alcanivorax borkumensis (strain ATCC 700651 / DSM 11573 / NCIMB 13689 / SK2)</name>
    <dbReference type="NCBI Taxonomy" id="393595"/>
    <lineage>
        <taxon>Bacteria</taxon>
        <taxon>Pseudomonadati</taxon>
        <taxon>Pseudomonadota</taxon>
        <taxon>Gammaproteobacteria</taxon>
        <taxon>Oceanospirillales</taxon>
        <taxon>Alcanivoracaceae</taxon>
        <taxon>Alcanivorax</taxon>
    </lineage>
</organism>
<proteinExistence type="inferred from homology"/>
<protein>
    <recommendedName>
        <fullName evidence="1">tRNA-specific 2-thiouridylase MnmA</fullName>
        <ecNumber evidence="1">2.8.1.13</ecNumber>
    </recommendedName>
</protein>
<evidence type="ECO:0000255" key="1">
    <source>
        <dbReference type="HAMAP-Rule" id="MF_00144"/>
    </source>
</evidence>
<reference key="1">
    <citation type="journal article" date="2006" name="Nat. Biotechnol.">
        <title>Genome sequence of the ubiquitous hydrocarbon-degrading marine bacterium Alcanivorax borkumensis.</title>
        <authorList>
            <person name="Schneiker S."/>
            <person name="Martins dos Santos V.A.P."/>
            <person name="Bartels D."/>
            <person name="Bekel T."/>
            <person name="Brecht M."/>
            <person name="Buhrmester J."/>
            <person name="Chernikova T.N."/>
            <person name="Denaro R."/>
            <person name="Ferrer M."/>
            <person name="Gertler C."/>
            <person name="Goesmann A."/>
            <person name="Golyshina O.V."/>
            <person name="Kaminski F."/>
            <person name="Khachane A.N."/>
            <person name="Lang S."/>
            <person name="Linke B."/>
            <person name="McHardy A.C."/>
            <person name="Meyer F."/>
            <person name="Nechitaylo T."/>
            <person name="Puehler A."/>
            <person name="Regenhardt D."/>
            <person name="Rupp O."/>
            <person name="Sabirova J.S."/>
            <person name="Selbitschka W."/>
            <person name="Yakimov M.M."/>
            <person name="Timmis K.N."/>
            <person name="Vorhoelter F.-J."/>
            <person name="Weidner S."/>
            <person name="Kaiser O."/>
            <person name="Golyshin P.N."/>
        </authorList>
    </citation>
    <scope>NUCLEOTIDE SEQUENCE [LARGE SCALE GENOMIC DNA]</scope>
    <source>
        <strain>ATCC 700651 / DSM 11573 / NCIMB 13689 / SK2</strain>
    </source>
</reference>
<comment type="function">
    <text evidence="1">Catalyzes the 2-thiolation of uridine at the wobble position (U34) of tRNA, leading to the formation of s(2)U34.</text>
</comment>
<comment type="catalytic activity">
    <reaction evidence="1">
        <text>S-sulfanyl-L-cysteinyl-[protein] + uridine(34) in tRNA + AH2 + ATP = 2-thiouridine(34) in tRNA + L-cysteinyl-[protein] + A + AMP + diphosphate + H(+)</text>
        <dbReference type="Rhea" id="RHEA:47032"/>
        <dbReference type="Rhea" id="RHEA-COMP:10131"/>
        <dbReference type="Rhea" id="RHEA-COMP:11726"/>
        <dbReference type="Rhea" id="RHEA-COMP:11727"/>
        <dbReference type="Rhea" id="RHEA-COMP:11728"/>
        <dbReference type="ChEBI" id="CHEBI:13193"/>
        <dbReference type="ChEBI" id="CHEBI:15378"/>
        <dbReference type="ChEBI" id="CHEBI:17499"/>
        <dbReference type="ChEBI" id="CHEBI:29950"/>
        <dbReference type="ChEBI" id="CHEBI:30616"/>
        <dbReference type="ChEBI" id="CHEBI:33019"/>
        <dbReference type="ChEBI" id="CHEBI:61963"/>
        <dbReference type="ChEBI" id="CHEBI:65315"/>
        <dbReference type="ChEBI" id="CHEBI:87170"/>
        <dbReference type="ChEBI" id="CHEBI:456215"/>
        <dbReference type="EC" id="2.8.1.13"/>
    </reaction>
</comment>
<comment type="subcellular location">
    <subcellularLocation>
        <location evidence="1">Cytoplasm</location>
    </subcellularLocation>
</comment>
<comment type="similarity">
    <text evidence="1">Belongs to the MnmA/TRMU family.</text>
</comment>